<protein>
    <recommendedName>
        <fullName evidence="1">Chromosomal replication initiator protein DnaA</fullName>
    </recommendedName>
</protein>
<reference key="1">
    <citation type="journal article" date="2000" name="Nature">
        <title>DNA sequence of both chromosomes of the cholera pathogen Vibrio cholerae.</title>
        <authorList>
            <person name="Heidelberg J.F."/>
            <person name="Eisen J.A."/>
            <person name="Nelson W.C."/>
            <person name="Clayton R.A."/>
            <person name="Gwinn M.L."/>
            <person name="Dodson R.J."/>
            <person name="Haft D.H."/>
            <person name="Hickey E.K."/>
            <person name="Peterson J.D."/>
            <person name="Umayam L.A."/>
            <person name="Gill S.R."/>
            <person name="Nelson K.E."/>
            <person name="Read T.D."/>
            <person name="Tettelin H."/>
            <person name="Richardson D.L."/>
            <person name="Ermolaeva M.D."/>
            <person name="Vamathevan J.J."/>
            <person name="Bass S."/>
            <person name="Qin H."/>
            <person name="Dragoi I."/>
            <person name="Sellers P."/>
            <person name="McDonald L.A."/>
            <person name="Utterback T.R."/>
            <person name="Fleischmann R.D."/>
            <person name="Nierman W.C."/>
            <person name="White O."/>
            <person name="Salzberg S.L."/>
            <person name="Smith H.O."/>
            <person name="Colwell R.R."/>
            <person name="Mekalanos J.J."/>
            <person name="Venter J.C."/>
            <person name="Fraser C.M."/>
        </authorList>
    </citation>
    <scope>NUCLEOTIDE SEQUENCE [LARGE SCALE GENOMIC DNA]</scope>
    <source>
        <strain>ATCC 39315 / El Tor Inaba N16961</strain>
    </source>
</reference>
<accession>Q9KVX6</accession>
<feature type="chain" id="PRO_0000114295" description="Chromosomal replication initiator protein DnaA">
    <location>
        <begin position="1"/>
        <end position="467"/>
    </location>
</feature>
<feature type="region of interest" description="Domain I, interacts with DnaA modulators" evidence="1">
    <location>
        <begin position="1"/>
        <end position="87"/>
    </location>
</feature>
<feature type="region of interest" description="Domain II" evidence="1">
    <location>
        <begin position="87"/>
        <end position="130"/>
    </location>
</feature>
<feature type="region of interest" description="Domain III, AAA+ region" evidence="1">
    <location>
        <begin position="131"/>
        <end position="347"/>
    </location>
</feature>
<feature type="region of interest" description="Domain IV, binds dsDNA" evidence="1">
    <location>
        <begin position="348"/>
        <end position="467"/>
    </location>
</feature>
<feature type="binding site" evidence="1">
    <location>
        <position position="175"/>
    </location>
    <ligand>
        <name>ATP</name>
        <dbReference type="ChEBI" id="CHEBI:30616"/>
    </ligand>
</feature>
<feature type="binding site" evidence="1">
    <location>
        <position position="177"/>
    </location>
    <ligand>
        <name>ATP</name>
        <dbReference type="ChEBI" id="CHEBI:30616"/>
    </ligand>
</feature>
<feature type="binding site" evidence="1">
    <location>
        <position position="178"/>
    </location>
    <ligand>
        <name>ATP</name>
        <dbReference type="ChEBI" id="CHEBI:30616"/>
    </ligand>
</feature>
<feature type="binding site" evidence="1">
    <location>
        <position position="179"/>
    </location>
    <ligand>
        <name>ATP</name>
        <dbReference type="ChEBI" id="CHEBI:30616"/>
    </ligand>
</feature>
<sequence length="467" mass="52886">MSSSLWLQCLQRLQEELPAAEFSMWVRPLQAELNDNTLTLFAPNRFVLDWVRDKYLNNINRLLMEFSGNDVPNLRFEVGSRPVVAPKPAPVRTAADVAAESSAPAQLAQRKPIHKTWDDDSAAADITHRSNVNPKHKFNNFVEGKSNQLGLAAARQVSDNPGAAYNPLFLYGGTGLGKTHLLHAVGNAIVDNNPNAKVVYMHSERFVQDMVKALQNNAIEEFKRYYRSVDALLIDDIQFFANKERSQEEFFHTFNALLEGNQQIILTSDRYPKEISGVEDRLKSRFGWGLTVAIEPPELETRVAILMKKAEDHQIHLPDEVAFFIAKRLRSNVRELEGALNRVIANANFTGRPITIDFVREALRDLLALQEKLVTIDNIQKTVAEYYKIKVADLLSKRRSRSVARPRQLAMALAKELTNHSLPEIGDAFGGRDHTTVLHACRKIEQLREESHDIKEDYSNLIRTLSS</sequence>
<evidence type="ECO:0000255" key="1">
    <source>
        <dbReference type="HAMAP-Rule" id="MF_00377"/>
    </source>
</evidence>
<evidence type="ECO:0000305" key="2"/>
<proteinExistence type="inferred from homology"/>
<keyword id="KW-0067">ATP-binding</keyword>
<keyword id="KW-0963">Cytoplasm</keyword>
<keyword id="KW-0235">DNA replication</keyword>
<keyword id="KW-0238">DNA-binding</keyword>
<keyword id="KW-0446">Lipid-binding</keyword>
<keyword id="KW-0547">Nucleotide-binding</keyword>
<keyword id="KW-1185">Reference proteome</keyword>
<organism>
    <name type="scientific">Vibrio cholerae serotype O1 (strain ATCC 39315 / El Tor Inaba N16961)</name>
    <dbReference type="NCBI Taxonomy" id="243277"/>
    <lineage>
        <taxon>Bacteria</taxon>
        <taxon>Pseudomonadati</taxon>
        <taxon>Pseudomonadota</taxon>
        <taxon>Gammaproteobacteria</taxon>
        <taxon>Vibrionales</taxon>
        <taxon>Vibrionaceae</taxon>
        <taxon>Vibrio</taxon>
    </lineage>
</organism>
<comment type="function">
    <text evidence="1">Plays an essential role in the initiation and regulation of chromosomal replication. ATP-DnaA binds to the origin of replication (oriC) to initiate formation of the DNA replication initiation complex once per cell cycle. Binds the DnaA box (a 9 base pair repeat at the origin) and separates the double-stranded (ds)DNA. Forms a right-handed helical filament on oriC DNA; dsDNA binds to the exterior of the filament while single-stranded (ss)DNA is stabiized in the filament's interior. The ATP-DnaA-oriC complex binds and stabilizes one strand of the AT-rich DNA unwinding element (DUE), permitting loading of DNA polymerase. After initiation quickly degrades to an ADP-DnaA complex that is not apt for DNA replication. Binds acidic phospholipids.</text>
</comment>
<comment type="subunit">
    <text evidence="1">Oligomerizes as a right-handed, spiral filament on DNA at oriC.</text>
</comment>
<comment type="subcellular location">
    <subcellularLocation>
        <location evidence="1">Cytoplasm</location>
    </subcellularLocation>
</comment>
<comment type="domain">
    <text evidence="1">Domain I is involved in oligomerization and binding regulators, domain II is flexibile and of varying length in different bacteria, domain III forms the AAA+ region, while domain IV binds dsDNA.</text>
</comment>
<comment type="similarity">
    <text evidence="1">Belongs to the DnaA family.</text>
</comment>
<comment type="sequence caution" evidence="2">
    <conflict type="erroneous initiation">
        <sequence resource="EMBL-CDS" id="AAF93190"/>
    </conflict>
</comment>
<gene>
    <name evidence="1" type="primary">dnaA</name>
    <name type="ordered locus">VC_0012</name>
</gene>
<dbReference type="EMBL" id="AE003852">
    <property type="protein sequence ID" value="AAF93190.1"/>
    <property type="status" value="ALT_INIT"/>
    <property type="molecule type" value="Genomic_DNA"/>
</dbReference>
<dbReference type="PIR" id="E82376">
    <property type="entry name" value="E82376"/>
</dbReference>
<dbReference type="RefSeq" id="NP_062596.1">
    <property type="nucleotide sequence ID" value="NC_002505.1"/>
</dbReference>
<dbReference type="RefSeq" id="WP_000099214.1">
    <property type="nucleotide sequence ID" value="NZ_LT906614.1"/>
</dbReference>
<dbReference type="SMR" id="Q9KVX6"/>
<dbReference type="STRING" id="243277.VC_0012"/>
<dbReference type="DNASU" id="2614412"/>
<dbReference type="EnsemblBacteria" id="AAF93190">
    <property type="protein sequence ID" value="AAF93190"/>
    <property type="gene ID" value="VC_0012"/>
</dbReference>
<dbReference type="GeneID" id="89513094"/>
<dbReference type="KEGG" id="vch:VC_0012"/>
<dbReference type="PATRIC" id="fig|243277.26.peg.11"/>
<dbReference type="eggNOG" id="COG0593">
    <property type="taxonomic scope" value="Bacteria"/>
</dbReference>
<dbReference type="HOGENOM" id="CLU_026910_0_1_6"/>
<dbReference type="Proteomes" id="UP000000584">
    <property type="component" value="Chromosome 1"/>
</dbReference>
<dbReference type="GO" id="GO:0005737">
    <property type="term" value="C:cytoplasm"/>
    <property type="evidence" value="ECO:0007669"/>
    <property type="project" value="UniProtKB-SubCell"/>
</dbReference>
<dbReference type="GO" id="GO:0005886">
    <property type="term" value="C:plasma membrane"/>
    <property type="evidence" value="ECO:0000318"/>
    <property type="project" value="GO_Central"/>
</dbReference>
<dbReference type="GO" id="GO:0005524">
    <property type="term" value="F:ATP binding"/>
    <property type="evidence" value="ECO:0007669"/>
    <property type="project" value="UniProtKB-UniRule"/>
</dbReference>
<dbReference type="GO" id="GO:0016887">
    <property type="term" value="F:ATP hydrolysis activity"/>
    <property type="evidence" value="ECO:0007669"/>
    <property type="project" value="InterPro"/>
</dbReference>
<dbReference type="GO" id="GO:0003688">
    <property type="term" value="F:DNA replication origin binding"/>
    <property type="evidence" value="ECO:0000318"/>
    <property type="project" value="GO_Central"/>
</dbReference>
<dbReference type="GO" id="GO:0008289">
    <property type="term" value="F:lipid binding"/>
    <property type="evidence" value="ECO:0007669"/>
    <property type="project" value="UniProtKB-KW"/>
</dbReference>
<dbReference type="GO" id="GO:0006260">
    <property type="term" value="P:DNA replication"/>
    <property type="evidence" value="ECO:0000318"/>
    <property type="project" value="GO_Central"/>
</dbReference>
<dbReference type="GO" id="GO:0006270">
    <property type="term" value="P:DNA replication initiation"/>
    <property type="evidence" value="ECO:0000318"/>
    <property type="project" value="GO_Central"/>
</dbReference>
<dbReference type="GO" id="GO:0006275">
    <property type="term" value="P:regulation of DNA replication"/>
    <property type="evidence" value="ECO:0007669"/>
    <property type="project" value="UniProtKB-UniRule"/>
</dbReference>
<dbReference type="CDD" id="cd00009">
    <property type="entry name" value="AAA"/>
    <property type="match status" value="1"/>
</dbReference>
<dbReference type="CDD" id="cd06571">
    <property type="entry name" value="Bac_DnaA_C"/>
    <property type="match status" value="1"/>
</dbReference>
<dbReference type="FunFam" id="1.10.1750.10:FF:000001">
    <property type="entry name" value="Chromosomal replication initiator protein DnaA"/>
    <property type="match status" value="1"/>
</dbReference>
<dbReference type="FunFam" id="1.10.8.60:FF:000003">
    <property type="entry name" value="Chromosomal replication initiator protein DnaA"/>
    <property type="match status" value="1"/>
</dbReference>
<dbReference type="FunFam" id="3.30.300.180:FF:000001">
    <property type="entry name" value="Chromosomal replication initiator protein DnaA"/>
    <property type="match status" value="1"/>
</dbReference>
<dbReference type="FunFam" id="3.40.50.300:FF:000103">
    <property type="entry name" value="Chromosomal replication initiator protein DnaA"/>
    <property type="match status" value="1"/>
</dbReference>
<dbReference type="Gene3D" id="1.10.1750.10">
    <property type="match status" value="1"/>
</dbReference>
<dbReference type="Gene3D" id="1.10.8.60">
    <property type="match status" value="1"/>
</dbReference>
<dbReference type="Gene3D" id="3.30.300.180">
    <property type="match status" value="1"/>
</dbReference>
<dbReference type="Gene3D" id="3.40.50.300">
    <property type="entry name" value="P-loop containing nucleotide triphosphate hydrolases"/>
    <property type="match status" value="1"/>
</dbReference>
<dbReference type="HAMAP" id="MF_00377">
    <property type="entry name" value="DnaA_bact"/>
    <property type="match status" value="1"/>
</dbReference>
<dbReference type="InterPro" id="IPR003593">
    <property type="entry name" value="AAA+_ATPase"/>
</dbReference>
<dbReference type="InterPro" id="IPR001957">
    <property type="entry name" value="Chromosome_initiator_DnaA"/>
</dbReference>
<dbReference type="InterPro" id="IPR020591">
    <property type="entry name" value="Chromosome_initiator_DnaA-like"/>
</dbReference>
<dbReference type="InterPro" id="IPR018312">
    <property type="entry name" value="Chromosome_initiator_DnaA_CS"/>
</dbReference>
<dbReference type="InterPro" id="IPR013159">
    <property type="entry name" value="DnaA_C"/>
</dbReference>
<dbReference type="InterPro" id="IPR013317">
    <property type="entry name" value="DnaA_dom"/>
</dbReference>
<dbReference type="InterPro" id="IPR024633">
    <property type="entry name" value="DnaA_N_dom"/>
</dbReference>
<dbReference type="InterPro" id="IPR038454">
    <property type="entry name" value="DnaA_N_sf"/>
</dbReference>
<dbReference type="InterPro" id="IPR055199">
    <property type="entry name" value="Hda_lid"/>
</dbReference>
<dbReference type="InterPro" id="IPR027417">
    <property type="entry name" value="P-loop_NTPase"/>
</dbReference>
<dbReference type="InterPro" id="IPR010921">
    <property type="entry name" value="Trp_repressor/repl_initiator"/>
</dbReference>
<dbReference type="NCBIfam" id="TIGR00362">
    <property type="entry name" value="DnaA"/>
    <property type="match status" value="1"/>
</dbReference>
<dbReference type="PANTHER" id="PTHR30050">
    <property type="entry name" value="CHROMOSOMAL REPLICATION INITIATOR PROTEIN DNAA"/>
    <property type="match status" value="1"/>
</dbReference>
<dbReference type="PANTHER" id="PTHR30050:SF2">
    <property type="entry name" value="CHROMOSOMAL REPLICATION INITIATOR PROTEIN DNAA"/>
    <property type="match status" value="1"/>
</dbReference>
<dbReference type="Pfam" id="PF00308">
    <property type="entry name" value="Bac_DnaA"/>
    <property type="match status" value="1"/>
</dbReference>
<dbReference type="Pfam" id="PF08299">
    <property type="entry name" value="Bac_DnaA_C"/>
    <property type="match status" value="1"/>
</dbReference>
<dbReference type="Pfam" id="PF11638">
    <property type="entry name" value="DnaA_N"/>
    <property type="match status" value="1"/>
</dbReference>
<dbReference type="Pfam" id="PF22688">
    <property type="entry name" value="Hda_lid"/>
    <property type="match status" value="1"/>
</dbReference>
<dbReference type="PRINTS" id="PR00051">
    <property type="entry name" value="DNAA"/>
</dbReference>
<dbReference type="SMART" id="SM00382">
    <property type="entry name" value="AAA"/>
    <property type="match status" value="1"/>
</dbReference>
<dbReference type="SMART" id="SM00760">
    <property type="entry name" value="Bac_DnaA_C"/>
    <property type="match status" value="1"/>
</dbReference>
<dbReference type="SUPFAM" id="SSF52540">
    <property type="entry name" value="P-loop containing nucleoside triphosphate hydrolases"/>
    <property type="match status" value="1"/>
</dbReference>
<dbReference type="SUPFAM" id="SSF48295">
    <property type="entry name" value="TrpR-like"/>
    <property type="match status" value="1"/>
</dbReference>
<dbReference type="PROSITE" id="PS01008">
    <property type="entry name" value="DNAA"/>
    <property type="match status" value="1"/>
</dbReference>
<name>DNAA_VIBCH</name>